<evidence type="ECO:0000269" key="1">
    <source>
    </source>
</evidence>
<evidence type="ECO:0000305" key="2"/>
<evidence type="ECO:0007829" key="3">
    <source>
        <dbReference type="PDB" id="1LQJ"/>
    </source>
</evidence>
<evidence type="ECO:0007829" key="4">
    <source>
        <dbReference type="PDB" id="3UF7"/>
    </source>
</evidence>
<accession>P12295</accession>
<name>UNG_ECOLI</name>
<organism>
    <name type="scientific">Escherichia coli (strain K12)</name>
    <dbReference type="NCBI Taxonomy" id="83333"/>
    <lineage>
        <taxon>Bacteria</taxon>
        <taxon>Pseudomonadati</taxon>
        <taxon>Pseudomonadota</taxon>
        <taxon>Gammaproteobacteria</taxon>
        <taxon>Enterobacterales</taxon>
        <taxon>Enterobacteriaceae</taxon>
        <taxon>Escherichia</taxon>
    </lineage>
</organism>
<proteinExistence type="evidence at protein level"/>
<feature type="initiator methionine" description="Removed" evidence="1">
    <location>
        <position position="1"/>
    </location>
</feature>
<feature type="chain" id="PRO_0000176091" description="Uracil-DNA glycosylase">
    <location>
        <begin position="2"/>
        <end position="229"/>
    </location>
</feature>
<feature type="active site" description="Proton acceptor">
    <location>
        <position position="64"/>
    </location>
</feature>
<feature type="helix" evidence="4">
    <location>
        <begin position="7"/>
        <end position="11"/>
    </location>
</feature>
<feature type="helix" evidence="4">
    <location>
        <begin position="14"/>
        <end position="16"/>
    </location>
</feature>
<feature type="helix" evidence="4">
    <location>
        <begin position="18"/>
        <end position="33"/>
    </location>
</feature>
<feature type="strand" evidence="4">
    <location>
        <begin position="37"/>
        <end position="39"/>
    </location>
</feature>
<feature type="helix" evidence="4">
    <location>
        <begin position="41"/>
        <end position="43"/>
    </location>
</feature>
<feature type="helix" evidence="4">
    <location>
        <begin position="46"/>
        <end position="50"/>
    </location>
</feature>
<feature type="helix" evidence="4">
    <location>
        <begin position="53"/>
        <end position="55"/>
    </location>
</feature>
<feature type="strand" evidence="4">
    <location>
        <begin position="58"/>
        <end position="64"/>
    </location>
</feature>
<feature type="turn" evidence="4">
    <location>
        <begin position="69"/>
        <end position="71"/>
    </location>
</feature>
<feature type="strand" evidence="4">
    <location>
        <begin position="74"/>
        <end position="77"/>
    </location>
</feature>
<feature type="strand" evidence="3">
    <location>
        <begin position="81"/>
        <end position="83"/>
    </location>
</feature>
<feature type="helix" evidence="4">
    <location>
        <begin position="87"/>
        <end position="99"/>
    </location>
</feature>
<feature type="helix" evidence="4">
    <location>
        <begin position="112"/>
        <end position="115"/>
    </location>
</feature>
<feature type="turn" evidence="4">
    <location>
        <begin position="116"/>
        <end position="118"/>
    </location>
</feature>
<feature type="strand" evidence="4">
    <location>
        <begin position="119"/>
        <end position="125"/>
    </location>
</feature>
<feature type="turn" evidence="4">
    <location>
        <begin position="133"/>
        <end position="138"/>
    </location>
</feature>
<feature type="helix" evidence="4">
    <location>
        <begin position="141"/>
        <end position="155"/>
    </location>
</feature>
<feature type="strand" evidence="4">
    <location>
        <begin position="160"/>
        <end position="165"/>
    </location>
</feature>
<feature type="helix" evidence="4">
    <location>
        <begin position="166"/>
        <end position="171"/>
    </location>
</feature>
<feature type="turn" evidence="4">
    <location>
        <begin position="172"/>
        <end position="174"/>
    </location>
</feature>
<feature type="turn" evidence="4">
    <location>
        <begin position="177"/>
        <end position="179"/>
    </location>
</feature>
<feature type="strand" evidence="4">
    <location>
        <begin position="180"/>
        <end position="185"/>
    </location>
</feature>
<feature type="turn" evidence="4">
    <location>
        <begin position="190"/>
        <end position="199"/>
    </location>
</feature>
<feature type="helix" evidence="4">
    <location>
        <begin position="202"/>
        <end position="212"/>
    </location>
</feature>
<protein>
    <recommendedName>
        <fullName>Uracil-DNA glycosylase</fullName>
        <shortName>UDG</shortName>
        <ecNumber>3.2.2.27</ecNumber>
    </recommendedName>
</protein>
<comment type="function">
    <text>Excises uracil residues from the DNA which can arise as a result of misincorporation of dUMP residues by DNA polymerase or due to deamination of cytosine.</text>
</comment>
<comment type="catalytic activity">
    <reaction>
        <text>Hydrolyzes single-stranded DNA or mismatched double-stranded DNA and polynucleotides, releasing free uracil.</text>
        <dbReference type="EC" id="3.2.2.27"/>
    </reaction>
</comment>
<comment type="subunit">
    <text>Monomer.</text>
</comment>
<comment type="interaction">
    <interactant intactId="EBI-559403">
        <id>P12295</id>
    </interactant>
    <interactant intactId="EBI-878571">
        <id>P08957</id>
        <label>hsdM</label>
    </interactant>
    <organismsDiffer>false</organismsDiffer>
    <experiments>3</experiments>
</comment>
<comment type="interaction">
    <interactant intactId="EBI-559403">
        <id>P12295</id>
    </interactant>
    <interactant intactId="EBI-370139">
        <id>P0A763</id>
        <label>ndk</label>
    </interactant>
    <organismsDiffer>false</organismsDiffer>
    <experiments>3</experiments>
</comment>
<comment type="interaction">
    <interactant intactId="EBI-559403">
        <id>P12295</id>
    </interactant>
    <interactant intactId="EBI-1025973">
        <id>P14739</id>
        <label>UGI</label>
    </interactant>
    <organismsDiffer>true</organismsDiffer>
    <experiments>4</experiments>
</comment>
<comment type="subcellular location">
    <subcellularLocation>
        <location>Cytoplasm</location>
    </subcellularLocation>
</comment>
<comment type="similarity">
    <text evidence="2">Belongs to the uracil-DNA glycosylase (UDG) superfamily. UNG family.</text>
</comment>
<keyword id="KW-0002">3D-structure</keyword>
<keyword id="KW-0963">Cytoplasm</keyword>
<keyword id="KW-0903">Direct protein sequencing</keyword>
<keyword id="KW-0227">DNA damage</keyword>
<keyword id="KW-0234">DNA repair</keyword>
<keyword id="KW-0378">Hydrolase</keyword>
<keyword id="KW-1185">Reference proteome</keyword>
<reference key="1">
    <citation type="journal article" date="1988" name="J. Biol. Chem.">
        <title>Sequence analysis, expression, and conservation of Escherichia coli uracil DNA glycosylase and its gene (ung).</title>
        <authorList>
            <person name="Varshney U."/>
            <person name="Hutcheon T."/>
            <person name="de Sande J.H."/>
        </authorList>
    </citation>
    <scope>NUCLEOTIDE SEQUENCE [GENOMIC DNA]</scope>
    <scope>PROTEIN SEQUENCE OF 2-32</scope>
</reference>
<reference key="2">
    <citation type="book" date="1993" name="The translational apparatus">
        <title>Non-ribosomal proteins affecting the assembly of ribosomes in Escherichia coli.</title>
        <editorList>
            <person name="Nierhaus K.H."/>
        </editorList>
        <authorList>
            <person name="Nashimoto H."/>
        </authorList>
    </citation>
    <scope>NUCLEOTIDE SEQUENCE [GENOMIC DNA]</scope>
    <source>
        <strain>K12</strain>
    </source>
</reference>
<reference key="3">
    <citation type="submission" date="1995-09" db="EMBL/GenBank/DDBJ databases">
        <authorList>
            <person name="Nashimoto H."/>
            <person name="Saito N."/>
        </authorList>
    </citation>
    <scope>NUCLEOTIDE SEQUENCE [GENOMIC DNA]</scope>
    <source>
        <strain>K12</strain>
    </source>
</reference>
<reference key="4">
    <citation type="journal article" date="1997" name="DNA Res.">
        <title>Construction of a contiguous 874-kb sequence of the Escherichia coli-K12 genome corresponding to 50.0-68.8 min on the linkage map and analysis of its sequence features.</title>
        <authorList>
            <person name="Yamamoto Y."/>
            <person name="Aiba H."/>
            <person name="Baba T."/>
            <person name="Hayashi K."/>
            <person name="Inada T."/>
            <person name="Isono K."/>
            <person name="Itoh T."/>
            <person name="Kimura S."/>
            <person name="Kitagawa M."/>
            <person name="Makino K."/>
            <person name="Miki T."/>
            <person name="Mitsuhashi N."/>
            <person name="Mizobuchi K."/>
            <person name="Mori H."/>
            <person name="Nakade S."/>
            <person name="Nakamura Y."/>
            <person name="Nashimoto H."/>
            <person name="Oshima T."/>
            <person name="Oyama S."/>
            <person name="Saito N."/>
            <person name="Sampei G."/>
            <person name="Satoh Y."/>
            <person name="Sivasundaram S."/>
            <person name="Tagami H."/>
            <person name="Takahashi H."/>
            <person name="Takeda J."/>
            <person name="Takemoto K."/>
            <person name="Uehara K."/>
            <person name="Wada C."/>
            <person name="Yamagata S."/>
            <person name="Horiuchi T."/>
        </authorList>
    </citation>
    <scope>NUCLEOTIDE SEQUENCE [LARGE SCALE GENOMIC DNA]</scope>
    <source>
        <strain>K12 / W3110 / ATCC 27325 / DSM 5911</strain>
    </source>
</reference>
<reference key="5">
    <citation type="journal article" date="1997" name="Science">
        <title>The complete genome sequence of Escherichia coli K-12.</title>
        <authorList>
            <person name="Blattner F.R."/>
            <person name="Plunkett G. III"/>
            <person name="Bloch C.A."/>
            <person name="Perna N.T."/>
            <person name="Burland V."/>
            <person name="Riley M."/>
            <person name="Collado-Vides J."/>
            <person name="Glasner J.D."/>
            <person name="Rode C.K."/>
            <person name="Mayhew G.F."/>
            <person name="Gregor J."/>
            <person name="Davis N.W."/>
            <person name="Kirkpatrick H.A."/>
            <person name="Goeden M.A."/>
            <person name="Rose D.J."/>
            <person name="Mau B."/>
            <person name="Shao Y."/>
        </authorList>
    </citation>
    <scope>NUCLEOTIDE SEQUENCE [LARGE SCALE GENOMIC DNA]</scope>
    <source>
        <strain>K12 / MG1655 / ATCC 47076</strain>
    </source>
</reference>
<reference key="6">
    <citation type="journal article" date="2006" name="Mol. Syst. Biol.">
        <title>Highly accurate genome sequences of Escherichia coli K-12 strains MG1655 and W3110.</title>
        <authorList>
            <person name="Hayashi K."/>
            <person name="Morooka N."/>
            <person name="Yamamoto Y."/>
            <person name="Fujita K."/>
            <person name="Isono K."/>
            <person name="Choi S."/>
            <person name="Ohtsubo E."/>
            <person name="Baba T."/>
            <person name="Wanner B.L."/>
            <person name="Mori H."/>
            <person name="Horiuchi T."/>
        </authorList>
    </citation>
    <scope>NUCLEOTIDE SEQUENCE [LARGE SCALE GENOMIC DNA]</scope>
    <source>
        <strain>K12 / W3110 / ATCC 27325 / DSM 5911</strain>
    </source>
</reference>
<reference key="7">
    <citation type="journal article" date="1997" name="J. Biol. Chem.">
        <title>Site-directed mutagenesis and characterization of uracil-DNA glycosylase inhibitor protein. Role of specific carboxylic amino acids in complex formation with Escherichia coli uracil-DNA glycosylase.</title>
        <authorList>
            <person name="Lundquist A.J."/>
            <person name="Beger R.D."/>
            <person name="Bennett S.E."/>
            <person name="Bolton P.H."/>
            <person name="Mosbaugh D.W."/>
        </authorList>
    </citation>
    <scope>STRUCTURE BY NMR</scope>
</reference>
<reference key="8">
    <citation type="journal article" date="1998" name="Nucleic Acids Res.">
        <title>X-ray analysis of a complex of Escherichia coli uracil DNA glycosylase (EcUDG) with a proteinaceous inhibitor. The structure elucidation of a prokaryotic UDG.</title>
        <authorList>
            <person name="Ravishankar R."/>
            <person name="Sagar M.B."/>
            <person name="Roy S."/>
            <person name="Purnapatre K."/>
            <person name="Handa P."/>
            <person name="Varshney U."/>
            <person name="Vijayan M."/>
        </authorList>
    </citation>
    <scope>X-RAY CRYSTALLOGRAPHY (3.2 ANGSTROMS)</scope>
</reference>
<reference key="9">
    <citation type="journal article" date="1999" name="J. Mol. Biol.">
        <title>Protein mimicry of DNA from crystal structures of the uracil-DNA glycosylase inhibitor protein and its complex with Escherichia coli uracil-DNA glycosylase.</title>
        <authorList>
            <person name="Putnam C.D."/>
            <person name="Shroyer M.J.N."/>
            <person name="Lundquist A.J."/>
            <person name="Mol C.D."/>
            <person name="Arvai A.S."/>
            <person name="Mosbaugh D.W."/>
            <person name="Tainer J.A."/>
        </authorList>
    </citation>
    <scope>X-RAY CRYSTALLOGRAPHY (1.55 ANGSTROMS)</scope>
</reference>
<reference key="10">
    <citation type="journal article" date="1999" name="Proteins">
        <title>Crystal structure of Escherichia coli uracil DNA glycosylase and its complexes with uracil and glycerol: structure and glycosylase mechanism revisited.</title>
        <authorList>
            <person name="Xiao G."/>
            <person name="Tordova M."/>
            <person name="Jagadeesh J."/>
            <person name="Drohat A.C."/>
            <person name="Stivers J.T."/>
            <person name="Gilliland G.L."/>
        </authorList>
    </citation>
    <scope>X-RAY CRYSTALLOGRAPHY (1.5 ANGSTROMS)</scope>
</reference>
<reference key="11">
    <citation type="journal article" date="2000" name="Biochemistry">
        <title>Stressing-out DNA? The contribution of serine-phosphodiester interactions in catalysis by uracil DNA glycosylase.</title>
        <authorList>
            <person name="Werner R.M."/>
            <person name="Jiang Y.L."/>
            <person name="Gordley R.G."/>
            <person name="Jagadeesh G.J."/>
            <person name="Ladner J.E."/>
            <person name="Xiao G."/>
            <person name="Tordova M."/>
            <person name="Gilliland G.L."/>
            <person name="Stivers J.T."/>
        </authorList>
    </citation>
    <scope>X-RAY CRYSTALLOGRAPHY (2.3 ANGSTROMS)</scope>
</reference>
<sequence length="229" mass="25693">MANELTWHDVLAEEKQQPYFLNTLQTVASERQSGVTIYPPQKDVFNAFRFTELGDVKVVILGQDPYHGPGQAHGLAFSVRPGIAIPPSLLNMYKELENTIPGFTRPNHGYLESWARQGVLLLNTVLTVRAGQAHSHASLGWETFTDKVISLINQHREGVVFLLWGSHAQKKGAIIDKQRHHVLKAPHPSPLSAHRGFFGCNHFVLANQWLEQRGETPIDWMPVLPAESE</sequence>
<gene>
    <name type="primary">ung</name>
    <name type="ordered locus">b2580</name>
    <name type="ordered locus">JW2564</name>
</gene>
<dbReference type="EC" id="3.2.2.27"/>
<dbReference type="EMBL" id="J03725">
    <property type="protein sequence ID" value="AAA24743.1"/>
    <property type="molecule type" value="Genomic_DNA"/>
</dbReference>
<dbReference type="EMBL" id="D13169">
    <property type="protein sequence ID" value="BAA02448.1"/>
    <property type="molecule type" value="Genomic_DNA"/>
</dbReference>
<dbReference type="EMBL" id="D64044">
    <property type="protein sequence ID" value="BAA10923.1"/>
    <property type="molecule type" value="Genomic_DNA"/>
</dbReference>
<dbReference type="EMBL" id="U00096">
    <property type="protein sequence ID" value="AAC75633.1"/>
    <property type="molecule type" value="Genomic_DNA"/>
</dbReference>
<dbReference type="EMBL" id="AP009048">
    <property type="protein sequence ID" value="BAA16466.1"/>
    <property type="molecule type" value="Genomic_DNA"/>
</dbReference>
<dbReference type="PIR" id="A28175">
    <property type="entry name" value="DGECU"/>
</dbReference>
<dbReference type="RefSeq" id="NP_417075.1">
    <property type="nucleotide sequence ID" value="NC_000913.3"/>
</dbReference>
<dbReference type="RefSeq" id="WP_001262716.1">
    <property type="nucleotide sequence ID" value="NZ_STEB01000011.1"/>
</dbReference>
<dbReference type="PDB" id="1EUG">
    <property type="method" value="X-ray"/>
    <property type="resolution" value="1.60 A"/>
    <property type="chains" value="A=1-229"/>
</dbReference>
<dbReference type="PDB" id="1EUI">
    <property type="method" value="X-ray"/>
    <property type="resolution" value="3.20 A"/>
    <property type="chains" value="A/B=2-229"/>
</dbReference>
<dbReference type="PDB" id="1FLZ">
    <property type="method" value="X-ray"/>
    <property type="resolution" value="2.30 A"/>
    <property type="chains" value="A=2-229"/>
</dbReference>
<dbReference type="PDB" id="1LQG">
    <property type="method" value="X-ray"/>
    <property type="resolution" value="2.90 A"/>
    <property type="chains" value="A/B=2-229"/>
</dbReference>
<dbReference type="PDB" id="1LQJ">
    <property type="method" value="X-ray"/>
    <property type="resolution" value="3.35 A"/>
    <property type="chains" value="A/B/C/D=2-229"/>
</dbReference>
<dbReference type="PDB" id="1LQM">
    <property type="method" value="X-ray"/>
    <property type="resolution" value="3.20 A"/>
    <property type="chains" value="A/C/E/G=2-229"/>
</dbReference>
<dbReference type="PDB" id="1UUG">
    <property type="method" value="X-ray"/>
    <property type="resolution" value="2.40 A"/>
    <property type="chains" value="A/C=1-229"/>
</dbReference>
<dbReference type="PDB" id="2EUG">
    <property type="method" value="X-ray"/>
    <property type="resolution" value="1.50 A"/>
    <property type="chains" value="A=1-229"/>
</dbReference>
<dbReference type="PDB" id="2UUG">
    <property type="method" value="X-ray"/>
    <property type="resolution" value="2.60 A"/>
    <property type="chains" value="A/B=1-229"/>
</dbReference>
<dbReference type="PDB" id="3EUG">
    <property type="method" value="X-ray"/>
    <property type="resolution" value="1.43 A"/>
    <property type="chains" value="A=1-229"/>
</dbReference>
<dbReference type="PDB" id="3UF7">
    <property type="method" value="X-ray"/>
    <property type="resolution" value="1.20 A"/>
    <property type="chains" value="A=1-229"/>
</dbReference>
<dbReference type="PDB" id="4EUG">
    <property type="method" value="X-ray"/>
    <property type="resolution" value="1.40 A"/>
    <property type="chains" value="A=1-229"/>
</dbReference>
<dbReference type="PDB" id="5EUG">
    <property type="method" value="X-ray"/>
    <property type="resolution" value="1.60 A"/>
    <property type="chains" value="A=1-229"/>
</dbReference>
<dbReference type="PDBsum" id="1EUG"/>
<dbReference type="PDBsum" id="1EUI"/>
<dbReference type="PDBsum" id="1FLZ"/>
<dbReference type="PDBsum" id="1LQG"/>
<dbReference type="PDBsum" id="1LQJ"/>
<dbReference type="PDBsum" id="1LQM"/>
<dbReference type="PDBsum" id="1UUG"/>
<dbReference type="PDBsum" id="2EUG"/>
<dbReference type="PDBsum" id="2UUG"/>
<dbReference type="PDBsum" id="3EUG"/>
<dbReference type="PDBsum" id="3UF7"/>
<dbReference type="PDBsum" id="4EUG"/>
<dbReference type="PDBsum" id="5EUG"/>
<dbReference type="SMR" id="P12295"/>
<dbReference type="BioGRID" id="4263474">
    <property type="interactions" value="137"/>
</dbReference>
<dbReference type="BioGRID" id="851404">
    <property type="interactions" value="2"/>
</dbReference>
<dbReference type="DIP" id="DIP-11092N"/>
<dbReference type="FunCoup" id="P12295">
    <property type="interactions" value="526"/>
</dbReference>
<dbReference type="IntAct" id="P12295">
    <property type="interactions" value="10"/>
</dbReference>
<dbReference type="STRING" id="511145.b2580"/>
<dbReference type="jPOST" id="P12295"/>
<dbReference type="PaxDb" id="511145-b2580"/>
<dbReference type="EnsemblBacteria" id="AAC75633">
    <property type="protein sequence ID" value="AAC75633"/>
    <property type="gene ID" value="b2580"/>
</dbReference>
<dbReference type="GeneID" id="93774506"/>
<dbReference type="GeneID" id="947067"/>
<dbReference type="KEGG" id="ecj:JW2564"/>
<dbReference type="KEGG" id="eco:b2580"/>
<dbReference type="KEGG" id="ecoc:C3026_14295"/>
<dbReference type="PATRIC" id="fig|1411691.4.peg.4154"/>
<dbReference type="EchoBASE" id="EB1051"/>
<dbReference type="eggNOG" id="COG0692">
    <property type="taxonomic scope" value="Bacteria"/>
</dbReference>
<dbReference type="HOGENOM" id="CLU_032162_3_1_6"/>
<dbReference type="InParanoid" id="P12295"/>
<dbReference type="OMA" id="PDNGYLM"/>
<dbReference type="OrthoDB" id="9804372at2"/>
<dbReference type="PhylomeDB" id="P12295"/>
<dbReference type="BioCyc" id="EcoCyc:EG11058-MONOMER"/>
<dbReference type="BioCyc" id="MetaCyc:EG11058-MONOMER"/>
<dbReference type="BRENDA" id="3.2.2.27">
    <property type="organism ID" value="2026"/>
</dbReference>
<dbReference type="SABIO-RK" id="P12295"/>
<dbReference type="EvolutionaryTrace" id="P12295"/>
<dbReference type="PRO" id="PR:P12295"/>
<dbReference type="Proteomes" id="UP000000625">
    <property type="component" value="Chromosome"/>
</dbReference>
<dbReference type="GO" id="GO:0005737">
    <property type="term" value="C:cytoplasm"/>
    <property type="evidence" value="ECO:0007669"/>
    <property type="project" value="UniProtKB-SubCell"/>
</dbReference>
<dbReference type="GO" id="GO:0004844">
    <property type="term" value="F:uracil DNA N-glycosylase activity"/>
    <property type="evidence" value="ECO:0000314"/>
    <property type="project" value="EcoCyc"/>
</dbReference>
<dbReference type="GO" id="GO:0097510">
    <property type="term" value="P:base-excision repair, AP site formation via deaminated base removal"/>
    <property type="evidence" value="ECO:0000314"/>
    <property type="project" value="EcoCyc"/>
</dbReference>
<dbReference type="CDD" id="cd10027">
    <property type="entry name" value="UDG-F1-like"/>
    <property type="match status" value="1"/>
</dbReference>
<dbReference type="FunFam" id="3.40.470.10:FF:000001">
    <property type="entry name" value="Uracil-DNA glycosylase"/>
    <property type="match status" value="1"/>
</dbReference>
<dbReference type="Gene3D" id="3.40.470.10">
    <property type="entry name" value="Uracil-DNA glycosylase-like domain"/>
    <property type="match status" value="1"/>
</dbReference>
<dbReference type="HAMAP" id="MF_00148">
    <property type="entry name" value="UDG"/>
    <property type="match status" value="1"/>
</dbReference>
<dbReference type="InterPro" id="IPR002043">
    <property type="entry name" value="UDG_fam1"/>
</dbReference>
<dbReference type="InterPro" id="IPR018085">
    <property type="entry name" value="Ura-DNA_Glyclase_AS"/>
</dbReference>
<dbReference type="InterPro" id="IPR005122">
    <property type="entry name" value="Uracil-DNA_glycosylase-like"/>
</dbReference>
<dbReference type="InterPro" id="IPR036895">
    <property type="entry name" value="Uracil-DNA_glycosylase-like_sf"/>
</dbReference>
<dbReference type="NCBIfam" id="NF003588">
    <property type="entry name" value="PRK05254.1-1"/>
    <property type="match status" value="1"/>
</dbReference>
<dbReference type="NCBIfam" id="NF003589">
    <property type="entry name" value="PRK05254.1-2"/>
    <property type="match status" value="1"/>
</dbReference>
<dbReference type="NCBIfam" id="NF003591">
    <property type="entry name" value="PRK05254.1-4"/>
    <property type="match status" value="1"/>
</dbReference>
<dbReference type="NCBIfam" id="NF003592">
    <property type="entry name" value="PRK05254.1-5"/>
    <property type="match status" value="1"/>
</dbReference>
<dbReference type="NCBIfam" id="TIGR00628">
    <property type="entry name" value="ung"/>
    <property type="match status" value="1"/>
</dbReference>
<dbReference type="PANTHER" id="PTHR11264">
    <property type="entry name" value="URACIL-DNA GLYCOSYLASE"/>
    <property type="match status" value="1"/>
</dbReference>
<dbReference type="PANTHER" id="PTHR11264:SF0">
    <property type="entry name" value="URACIL-DNA GLYCOSYLASE"/>
    <property type="match status" value="1"/>
</dbReference>
<dbReference type="Pfam" id="PF03167">
    <property type="entry name" value="UDG"/>
    <property type="match status" value="1"/>
</dbReference>
<dbReference type="SMART" id="SM00986">
    <property type="entry name" value="UDG"/>
    <property type="match status" value="1"/>
</dbReference>
<dbReference type="SMART" id="SM00987">
    <property type="entry name" value="UreE_C"/>
    <property type="match status" value="1"/>
</dbReference>
<dbReference type="SUPFAM" id="SSF52141">
    <property type="entry name" value="Uracil-DNA glycosylase-like"/>
    <property type="match status" value="1"/>
</dbReference>
<dbReference type="PROSITE" id="PS00130">
    <property type="entry name" value="U_DNA_GLYCOSYLASE"/>
    <property type="match status" value="1"/>
</dbReference>